<keyword id="KW-0067">ATP-binding</keyword>
<keyword id="KW-1003">Cell membrane</keyword>
<keyword id="KW-0963">Cytoplasm</keyword>
<keyword id="KW-0472">Membrane</keyword>
<keyword id="KW-0547">Nucleotide-binding</keyword>
<keyword id="KW-0653">Protein transport</keyword>
<keyword id="KW-1278">Translocase</keyword>
<keyword id="KW-0811">Translocation</keyword>
<keyword id="KW-0813">Transport</keyword>
<dbReference type="EC" id="7.4.2.8" evidence="1"/>
<dbReference type="EMBL" id="CP000422">
    <property type="protein sequence ID" value="ABJ67524.1"/>
    <property type="molecule type" value="Genomic_DNA"/>
</dbReference>
<dbReference type="SMR" id="Q03GZ8"/>
<dbReference type="STRING" id="278197.PEPE_0428"/>
<dbReference type="GeneID" id="33062486"/>
<dbReference type="KEGG" id="ppe:PEPE_0428"/>
<dbReference type="eggNOG" id="COG0653">
    <property type="taxonomic scope" value="Bacteria"/>
</dbReference>
<dbReference type="HOGENOM" id="CLU_005314_3_2_9"/>
<dbReference type="OrthoDB" id="9805579at2"/>
<dbReference type="Proteomes" id="UP000000773">
    <property type="component" value="Chromosome"/>
</dbReference>
<dbReference type="GO" id="GO:0031522">
    <property type="term" value="C:cell envelope Sec protein transport complex"/>
    <property type="evidence" value="ECO:0007669"/>
    <property type="project" value="TreeGrafter"/>
</dbReference>
<dbReference type="GO" id="GO:0005829">
    <property type="term" value="C:cytosol"/>
    <property type="evidence" value="ECO:0007669"/>
    <property type="project" value="TreeGrafter"/>
</dbReference>
<dbReference type="GO" id="GO:0005886">
    <property type="term" value="C:plasma membrane"/>
    <property type="evidence" value="ECO:0007669"/>
    <property type="project" value="UniProtKB-SubCell"/>
</dbReference>
<dbReference type="GO" id="GO:0005524">
    <property type="term" value="F:ATP binding"/>
    <property type="evidence" value="ECO:0007669"/>
    <property type="project" value="UniProtKB-UniRule"/>
</dbReference>
<dbReference type="GO" id="GO:0008564">
    <property type="term" value="F:protein-exporting ATPase activity"/>
    <property type="evidence" value="ECO:0007669"/>
    <property type="project" value="UniProtKB-EC"/>
</dbReference>
<dbReference type="GO" id="GO:0065002">
    <property type="term" value="P:intracellular protein transmembrane transport"/>
    <property type="evidence" value="ECO:0007669"/>
    <property type="project" value="UniProtKB-UniRule"/>
</dbReference>
<dbReference type="GO" id="GO:0017038">
    <property type="term" value="P:protein import"/>
    <property type="evidence" value="ECO:0007669"/>
    <property type="project" value="InterPro"/>
</dbReference>
<dbReference type="GO" id="GO:0006605">
    <property type="term" value="P:protein targeting"/>
    <property type="evidence" value="ECO:0007669"/>
    <property type="project" value="UniProtKB-UniRule"/>
</dbReference>
<dbReference type="GO" id="GO:0043952">
    <property type="term" value="P:protein transport by the Sec complex"/>
    <property type="evidence" value="ECO:0007669"/>
    <property type="project" value="TreeGrafter"/>
</dbReference>
<dbReference type="CDD" id="cd17928">
    <property type="entry name" value="DEXDc_SecA"/>
    <property type="match status" value="1"/>
</dbReference>
<dbReference type="CDD" id="cd18803">
    <property type="entry name" value="SF2_C_secA"/>
    <property type="match status" value="1"/>
</dbReference>
<dbReference type="FunFam" id="3.40.50.300:FF:000429">
    <property type="entry name" value="Preprotein translocase subunit SecA"/>
    <property type="match status" value="1"/>
</dbReference>
<dbReference type="FunFam" id="3.90.1440.10:FF:000001">
    <property type="entry name" value="Preprotein translocase subunit SecA"/>
    <property type="match status" value="1"/>
</dbReference>
<dbReference type="Gene3D" id="1.10.3060.10">
    <property type="entry name" value="Helical scaffold and wing domains of SecA"/>
    <property type="match status" value="1"/>
</dbReference>
<dbReference type="Gene3D" id="3.40.50.300">
    <property type="entry name" value="P-loop containing nucleotide triphosphate hydrolases"/>
    <property type="match status" value="3"/>
</dbReference>
<dbReference type="Gene3D" id="3.90.1440.10">
    <property type="entry name" value="SecA, preprotein cross-linking domain"/>
    <property type="match status" value="1"/>
</dbReference>
<dbReference type="HAMAP" id="MF_01382">
    <property type="entry name" value="SecA"/>
    <property type="match status" value="1"/>
</dbReference>
<dbReference type="InterPro" id="IPR014001">
    <property type="entry name" value="Helicase_ATP-bd"/>
</dbReference>
<dbReference type="InterPro" id="IPR001650">
    <property type="entry name" value="Helicase_C-like"/>
</dbReference>
<dbReference type="InterPro" id="IPR027417">
    <property type="entry name" value="P-loop_NTPase"/>
</dbReference>
<dbReference type="InterPro" id="IPR000185">
    <property type="entry name" value="SecA"/>
</dbReference>
<dbReference type="InterPro" id="IPR020937">
    <property type="entry name" value="SecA_CS"/>
</dbReference>
<dbReference type="InterPro" id="IPR011115">
    <property type="entry name" value="SecA_DEAD"/>
</dbReference>
<dbReference type="InterPro" id="IPR014018">
    <property type="entry name" value="SecA_motor_DEAD"/>
</dbReference>
<dbReference type="InterPro" id="IPR011130">
    <property type="entry name" value="SecA_preprotein_X-link_dom"/>
</dbReference>
<dbReference type="InterPro" id="IPR044722">
    <property type="entry name" value="SecA_SF2_C"/>
</dbReference>
<dbReference type="InterPro" id="IPR011116">
    <property type="entry name" value="SecA_Wing/Scaffold"/>
</dbReference>
<dbReference type="InterPro" id="IPR036266">
    <property type="entry name" value="SecA_Wing/Scaffold_sf"/>
</dbReference>
<dbReference type="InterPro" id="IPR036670">
    <property type="entry name" value="SecA_X-link_sf"/>
</dbReference>
<dbReference type="NCBIfam" id="NF006630">
    <property type="entry name" value="PRK09200.1"/>
    <property type="match status" value="1"/>
</dbReference>
<dbReference type="NCBIfam" id="NF009538">
    <property type="entry name" value="PRK12904.1"/>
    <property type="match status" value="1"/>
</dbReference>
<dbReference type="NCBIfam" id="TIGR00963">
    <property type="entry name" value="secA"/>
    <property type="match status" value="1"/>
</dbReference>
<dbReference type="PANTHER" id="PTHR30612:SF0">
    <property type="entry name" value="CHLOROPLAST PROTEIN-TRANSPORTING ATPASE"/>
    <property type="match status" value="1"/>
</dbReference>
<dbReference type="PANTHER" id="PTHR30612">
    <property type="entry name" value="SECA INNER MEMBRANE COMPONENT OF SEC PROTEIN SECRETION SYSTEM"/>
    <property type="match status" value="1"/>
</dbReference>
<dbReference type="Pfam" id="PF21090">
    <property type="entry name" value="P-loop_SecA"/>
    <property type="match status" value="2"/>
</dbReference>
<dbReference type="Pfam" id="PF07517">
    <property type="entry name" value="SecA_DEAD"/>
    <property type="match status" value="1"/>
</dbReference>
<dbReference type="Pfam" id="PF01043">
    <property type="entry name" value="SecA_PP_bind"/>
    <property type="match status" value="1"/>
</dbReference>
<dbReference type="Pfam" id="PF07516">
    <property type="entry name" value="SecA_SW"/>
    <property type="match status" value="1"/>
</dbReference>
<dbReference type="PRINTS" id="PR00906">
    <property type="entry name" value="SECA"/>
</dbReference>
<dbReference type="SMART" id="SM00957">
    <property type="entry name" value="SecA_DEAD"/>
    <property type="match status" value="1"/>
</dbReference>
<dbReference type="SMART" id="SM00958">
    <property type="entry name" value="SecA_PP_bind"/>
    <property type="match status" value="1"/>
</dbReference>
<dbReference type="SUPFAM" id="SSF81886">
    <property type="entry name" value="Helical scaffold and wing domains of SecA"/>
    <property type="match status" value="1"/>
</dbReference>
<dbReference type="SUPFAM" id="SSF52540">
    <property type="entry name" value="P-loop containing nucleoside triphosphate hydrolases"/>
    <property type="match status" value="2"/>
</dbReference>
<dbReference type="SUPFAM" id="SSF81767">
    <property type="entry name" value="Pre-protein crosslinking domain of SecA"/>
    <property type="match status" value="1"/>
</dbReference>
<dbReference type="PROSITE" id="PS01312">
    <property type="entry name" value="SECA"/>
    <property type="match status" value="1"/>
</dbReference>
<dbReference type="PROSITE" id="PS51196">
    <property type="entry name" value="SECA_MOTOR_DEAD"/>
    <property type="match status" value="1"/>
</dbReference>
<protein>
    <recommendedName>
        <fullName evidence="1">Protein translocase subunit SecA 1</fullName>
        <ecNumber evidence="1">7.4.2.8</ecNumber>
    </recommendedName>
</protein>
<accession>Q03GZ8</accession>
<sequence>MANILKKWVESDARELKRLGKKADKIEALKEEMEQLNDEKLKAKTTEFKERLQNGETLDDILVEAFAVAREAAKRVLGLFPFRVQLIGGMVLHGGNIAEMKTGEGKTLTATLPVYLNALGGKGVHVVTVNEYLAERDSSEMGELYKWLGLTVGVNSSEMTPDQKREAYNCDITYSTNSEIGFDYLRDNMVVYKEDMVQRPLNFALIDEVDSILIDEARTPLIISGQTEPTVTLYERADRYVKTLADGDYTIDWESKSISLTENGIRRAENFFKTDNLYDVENSALNHHIDQALRANYIMTKDKDYVVSDGEVLIVDSFTGRVMEGRRFSDGLHQAIEAKEHVEIQDGAKTMANITYQNLFRMYRKLSGMTGTARTEAEEFREIYNMEVTTIPTNRPVARDDRPDLLYPTLESKFKAVVKEIRDLHIKGQPVLVGTVAVETSEYLSRLLDREGIPHVVLNAKNHAREAEIVTNAGQKGAVTIATNMAGRGTDIKLGPGVVELGGLAVIGTERHESRRIDNQLRGRSGRQGDVGMSQFYLSLEDDLMIRFGSERIKDLLSRMKIADEDAVIRSGLISRQVESAQKRVEGNNYDARKNVLQYDDVMRAQREVIYAERQQVIMEETSLKDVLMPMVDRTIDRVVDAHTQKTQKNFDLETIVEFARTALVSDKDIHQADVEGMSAKEIKDYLKQLADQMYIEKEKALYDPAQILEFEKVVILRVVDQHWTDHIDAMDQLRQSVGLRGYGQLNPLVEYQQEGYRMFNEMITDIEYETTRLFMKSEIRQNLQR</sequence>
<evidence type="ECO:0000255" key="1">
    <source>
        <dbReference type="HAMAP-Rule" id="MF_01382"/>
    </source>
</evidence>
<gene>
    <name evidence="1" type="primary">secA1</name>
    <name type="ordered locus">PEPE_0428</name>
</gene>
<reference key="1">
    <citation type="journal article" date="2006" name="Proc. Natl. Acad. Sci. U.S.A.">
        <title>Comparative genomics of the lactic acid bacteria.</title>
        <authorList>
            <person name="Makarova K.S."/>
            <person name="Slesarev A."/>
            <person name="Wolf Y.I."/>
            <person name="Sorokin A."/>
            <person name="Mirkin B."/>
            <person name="Koonin E.V."/>
            <person name="Pavlov A."/>
            <person name="Pavlova N."/>
            <person name="Karamychev V."/>
            <person name="Polouchine N."/>
            <person name="Shakhova V."/>
            <person name="Grigoriev I."/>
            <person name="Lou Y."/>
            <person name="Rohksar D."/>
            <person name="Lucas S."/>
            <person name="Huang K."/>
            <person name="Goodstein D.M."/>
            <person name="Hawkins T."/>
            <person name="Plengvidhya V."/>
            <person name="Welker D."/>
            <person name="Hughes J."/>
            <person name="Goh Y."/>
            <person name="Benson A."/>
            <person name="Baldwin K."/>
            <person name="Lee J.-H."/>
            <person name="Diaz-Muniz I."/>
            <person name="Dosti B."/>
            <person name="Smeianov V."/>
            <person name="Wechter W."/>
            <person name="Barabote R."/>
            <person name="Lorca G."/>
            <person name="Altermann E."/>
            <person name="Barrangou R."/>
            <person name="Ganesan B."/>
            <person name="Xie Y."/>
            <person name="Rawsthorne H."/>
            <person name="Tamir D."/>
            <person name="Parker C."/>
            <person name="Breidt F."/>
            <person name="Broadbent J.R."/>
            <person name="Hutkins R."/>
            <person name="O'Sullivan D."/>
            <person name="Steele J."/>
            <person name="Unlu G."/>
            <person name="Saier M.H. Jr."/>
            <person name="Klaenhammer T."/>
            <person name="Richardson P."/>
            <person name="Kozyavkin S."/>
            <person name="Weimer B.C."/>
            <person name="Mills D.A."/>
        </authorList>
    </citation>
    <scope>NUCLEOTIDE SEQUENCE [LARGE SCALE GENOMIC DNA]</scope>
    <source>
        <strain>ATCC 25745 / CCUG 21536 / LMG 10740 / 183-1w</strain>
    </source>
</reference>
<comment type="function">
    <text evidence="1">Part of the Sec protein translocase complex. Interacts with the SecYEG preprotein conducting channel. Has a central role in coupling the hydrolysis of ATP to the transfer of proteins into and across the cell membrane, serving as an ATP-driven molecular motor driving the stepwise translocation of polypeptide chains across the membrane.</text>
</comment>
<comment type="catalytic activity">
    <reaction evidence="1">
        <text>ATP + H2O + cellular proteinSide 1 = ADP + phosphate + cellular proteinSide 2.</text>
        <dbReference type="EC" id="7.4.2.8"/>
    </reaction>
</comment>
<comment type="subunit">
    <text evidence="1">Monomer and homodimer. Part of the essential Sec protein translocation apparatus which comprises SecA, SecYEG and auxiliary proteins SecDF. Other proteins may also be involved.</text>
</comment>
<comment type="subcellular location">
    <subcellularLocation>
        <location evidence="1">Cell membrane</location>
        <topology evidence="1">Peripheral membrane protein</topology>
        <orientation evidence="1">Cytoplasmic side</orientation>
    </subcellularLocation>
    <subcellularLocation>
        <location evidence="1">Cytoplasm</location>
    </subcellularLocation>
    <text evidence="1">Distribution is 50-50.</text>
</comment>
<comment type="similarity">
    <text evidence="1">Belongs to the SecA family.</text>
</comment>
<proteinExistence type="inferred from homology"/>
<feature type="chain" id="PRO_0000320884" description="Protein translocase subunit SecA 1">
    <location>
        <begin position="1"/>
        <end position="786"/>
    </location>
</feature>
<feature type="binding site" evidence="1">
    <location>
        <position position="85"/>
    </location>
    <ligand>
        <name>ATP</name>
        <dbReference type="ChEBI" id="CHEBI:30616"/>
    </ligand>
</feature>
<feature type="binding site" evidence="1">
    <location>
        <begin position="103"/>
        <end position="107"/>
    </location>
    <ligand>
        <name>ATP</name>
        <dbReference type="ChEBI" id="CHEBI:30616"/>
    </ligand>
</feature>
<feature type="binding site" evidence="1">
    <location>
        <position position="491"/>
    </location>
    <ligand>
        <name>ATP</name>
        <dbReference type="ChEBI" id="CHEBI:30616"/>
    </ligand>
</feature>
<name>SECA1_PEDPA</name>
<organism>
    <name type="scientific">Pediococcus pentosaceus (strain ATCC 25745 / CCUG 21536 / LMG 10740 / 183-1w)</name>
    <dbReference type="NCBI Taxonomy" id="278197"/>
    <lineage>
        <taxon>Bacteria</taxon>
        <taxon>Bacillati</taxon>
        <taxon>Bacillota</taxon>
        <taxon>Bacilli</taxon>
        <taxon>Lactobacillales</taxon>
        <taxon>Lactobacillaceae</taxon>
        <taxon>Pediococcus</taxon>
    </lineage>
</organism>